<organism>
    <name type="scientific">Synechococcus elongatus (strain ATCC 33912 / PCC 7942 / FACHB-805)</name>
    <name type="common">Anacystis nidulans R2</name>
    <dbReference type="NCBI Taxonomy" id="1140"/>
    <lineage>
        <taxon>Bacteria</taxon>
        <taxon>Bacillati</taxon>
        <taxon>Cyanobacteriota</taxon>
        <taxon>Cyanophyceae</taxon>
        <taxon>Synechococcales</taxon>
        <taxon>Synechococcaceae</taxon>
        <taxon>Synechococcus</taxon>
    </lineage>
</organism>
<accession>P21577</accession>
<accession>Q31S98</accession>
<proteinExistence type="evidence at protein level"/>
<evidence type="ECO:0000250" key="1"/>
<evidence type="ECO:0000305" key="2"/>
<comment type="function">
    <text evidence="1">Catalyzes the oxidative decarboxylation of 6-phosphogluconate to ribulose 5-phosphate and CO(2), with concomitant reduction of NADP to NADPH.</text>
</comment>
<comment type="catalytic activity">
    <reaction>
        <text>6-phospho-D-gluconate + NADP(+) = D-ribulose 5-phosphate + CO2 + NADPH</text>
        <dbReference type="Rhea" id="RHEA:10116"/>
        <dbReference type="ChEBI" id="CHEBI:16526"/>
        <dbReference type="ChEBI" id="CHEBI:57783"/>
        <dbReference type="ChEBI" id="CHEBI:58121"/>
        <dbReference type="ChEBI" id="CHEBI:58349"/>
        <dbReference type="ChEBI" id="CHEBI:58759"/>
        <dbReference type="EC" id="1.1.1.44"/>
    </reaction>
</comment>
<comment type="pathway">
    <text>Carbohydrate degradation; pentose phosphate pathway; D-ribulose 5-phosphate from D-glucose 6-phosphate (oxidative stage): step 3/3.</text>
</comment>
<comment type="subunit">
    <text evidence="1">Homodimer.</text>
</comment>
<comment type="similarity">
    <text evidence="2">Belongs to the 6-phosphogluconate dehydrogenase family.</text>
</comment>
<keyword id="KW-0311">Gluconate utilization</keyword>
<keyword id="KW-0521">NADP</keyword>
<keyword id="KW-0560">Oxidoreductase</keyword>
<keyword id="KW-0570">Pentose shunt</keyword>
<keyword id="KW-1185">Reference proteome</keyword>
<dbReference type="EC" id="1.1.1.44"/>
<dbReference type="EMBL" id="M55002">
    <property type="protein sequence ID" value="AAA27330.1"/>
    <property type="molecule type" value="Genomic_DNA"/>
</dbReference>
<dbReference type="EMBL" id="X58719">
    <property type="protein sequence ID" value="CAA41555.1"/>
    <property type="molecule type" value="Genomic_DNA"/>
</dbReference>
<dbReference type="EMBL" id="CP000100">
    <property type="protein sequence ID" value="ABB56071.1"/>
    <property type="molecule type" value="Genomic_DNA"/>
</dbReference>
<dbReference type="PIR" id="S14628">
    <property type="entry name" value="S14628"/>
</dbReference>
<dbReference type="SMR" id="P21577"/>
<dbReference type="STRING" id="1140.Synpcc7942_0039"/>
<dbReference type="PaxDb" id="1140-Synpcc7942_0039"/>
<dbReference type="KEGG" id="syf:Synpcc7942_0039"/>
<dbReference type="eggNOG" id="COG0362">
    <property type="taxonomic scope" value="Bacteria"/>
</dbReference>
<dbReference type="HOGENOM" id="CLU_024540_4_2_3"/>
<dbReference type="OrthoDB" id="9804542at2"/>
<dbReference type="BioCyc" id="SYNEL:SYNPCC7942_0039-MONOMER"/>
<dbReference type="UniPathway" id="UPA00115">
    <property type="reaction ID" value="UER00410"/>
</dbReference>
<dbReference type="Proteomes" id="UP000889800">
    <property type="component" value="Chromosome"/>
</dbReference>
<dbReference type="GO" id="GO:0050661">
    <property type="term" value="F:NADP binding"/>
    <property type="evidence" value="ECO:0007669"/>
    <property type="project" value="InterPro"/>
</dbReference>
<dbReference type="GO" id="GO:0004616">
    <property type="term" value="F:phosphogluconate dehydrogenase (decarboxylating) activity"/>
    <property type="evidence" value="ECO:0007669"/>
    <property type="project" value="UniProtKB-EC"/>
</dbReference>
<dbReference type="GO" id="GO:0019521">
    <property type="term" value="P:D-gluconate metabolic process"/>
    <property type="evidence" value="ECO:0007669"/>
    <property type="project" value="UniProtKB-KW"/>
</dbReference>
<dbReference type="GO" id="GO:0016054">
    <property type="term" value="P:organic acid catabolic process"/>
    <property type="evidence" value="ECO:0007669"/>
    <property type="project" value="UniProtKB-ARBA"/>
</dbReference>
<dbReference type="GO" id="GO:0006098">
    <property type="term" value="P:pentose-phosphate shunt"/>
    <property type="evidence" value="ECO:0007669"/>
    <property type="project" value="UniProtKB-UniPathway"/>
</dbReference>
<dbReference type="FunFam" id="1.10.1040.10:FF:000002">
    <property type="entry name" value="6-phosphogluconate dehydrogenase, decarboxylating"/>
    <property type="match status" value="1"/>
</dbReference>
<dbReference type="FunFam" id="1.20.5.320:FF:000001">
    <property type="entry name" value="6-phosphogluconate dehydrogenase, decarboxylating"/>
    <property type="match status" value="1"/>
</dbReference>
<dbReference type="FunFam" id="3.40.50.720:FF:000007">
    <property type="entry name" value="6-phosphogluconate dehydrogenase, decarboxylating"/>
    <property type="match status" value="1"/>
</dbReference>
<dbReference type="Gene3D" id="1.20.5.320">
    <property type="entry name" value="6-Phosphogluconate Dehydrogenase, domain 3"/>
    <property type="match status" value="1"/>
</dbReference>
<dbReference type="Gene3D" id="1.10.1040.10">
    <property type="entry name" value="N-(1-d-carboxylethyl)-l-norvaline Dehydrogenase, domain 2"/>
    <property type="match status" value="1"/>
</dbReference>
<dbReference type="Gene3D" id="3.40.50.720">
    <property type="entry name" value="NAD(P)-binding Rossmann-like Domain"/>
    <property type="match status" value="1"/>
</dbReference>
<dbReference type="InterPro" id="IPR008927">
    <property type="entry name" value="6-PGluconate_DH-like_C_sf"/>
</dbReference>
<dbReference type="InterPro" id="IPR013328">
    <property type="entry name" value="6PGD_dom2"/>
</dbReference>
<dbReference type="InterPro" id="IPR006114">
    <property type="entry name" value="6PGDH_C"/>
</dbReference>
<dbReference type="InterPro" id="IPR006113">
    <property type="entry name" value="6PGDH_Gnd/GntZ"/>
</dbReference>
<dbReference type="InterPro" id="IPR006115">
    <property type="entry name" value="6PGDH_NADP-bd"/>
</dbReference>
<dbReference type="InterPro" id="IPR006184">
    <property type="entry name" value="6PGdom_BS"/>
</dbReference>
<dbReference type="InterPro" id="IPR036291">
    <property type="entry name" value="NAD(P)-bd_dom_sf"/>
</dbReference>
<dbReference type="InterPro" id="IPR006183">
    <property type="entry name" value="Pgluconate_DH"/>
</dbReference>
<dbReference type="NCBIfam" id="TIGR00873">
    <property type="entry name" value="gnd"/>
    <property type="match status" value="1"/>
</dbReference>
<dbReference type="NCBIfam" id="NF006765">
    <property type="entry name" value="PRK09287.1"/>
    <property type="match status" value="1"/>
</dbReference>
<dbReference type="PANTHER" id="PTHR11811">
    <property type="entry name" value="6-PHOSPHOGLUCONATE DEHYDROGENASE"/>
    <property type="match status" value="1"/>
</dbReference>
<dbReference type="Pfam" id="PF00393">
    <property type="entry name" value="6PGD"/>
    <property type="match status" value="1"/>
</dbReference>
<dbReference type="Pfam" id="PF03446">
    <property type="entry name" value="NAD_binding_2"/>
    <property type="match status" value="1"/>
</dbReference>
<dbReference type="PIRSF" id="PIRSF000109">
    <property type="entry name" value="6PGD"/>
    <property type="match status" value="1"/>
</dbReference>
<dbReference type="PRINTS" id="PR00076">
    <property type="entry name" value="6PGDHDRGNASE"/>
</dbReference>
<dbReference type="SMART" id="SM01350">
    <property type="entry name" value="6PGD"/>
    <property type="match status" value="1"/>
</dbReference>
<dbReference type="SUPFAM" id="SSF48179">
    <property type="entry name" value="6-phosphogluconate dehydrogenase C-terminal domain-like"/>
    <property type="match status" value="1"/>
</dbReference>
<dbReference type="SUPFAM" id="SSF51735">
    <property type="entry name" value="NAD(P)-binding Rossmann-fold domains"/>
    <property type="match status" value="1"/>
</dbReference>
<dbReference type="PROSITE" id="PS00461">
    <property type="entry name" value="6PGD"/>
    <property type="match status" value="1"/>
</dbReference>
<gene>
    <name type="primary">gnd</name>
    <name type="ordered locus">Synpcc7942_0039</name>
</gene>
<sequence>MALQQFGLIGLAVMGENLALNIERNGFSLTVYNRTAEKTEAFMADRAQGKNIVPAYSLEDFVASLERPRRILVMVKAGGPVDAVVEQLKPLLDPGDLIIDGGNSLFTDTERRVKDLEALGLGFMGMGVSGGEEGALNGPSLMPGGTQAAYEAVEPIVRSIAAQVDDGPCVTYIGPGGSGHYVKMVHNGIEYGDMQLIAEAYDLLKSVAGLNASELHDVFAAWNKTPELDSFLIEITADIFTKVDDLGTGQPLVELILDAAGQKGTGRWTVETALEIGVAIPTIIAAVNARILSSIKAERQAASEILSGPITEPFSGDRQAFIDSVRDALYCSKICSYAQGMALLAKASQVYNYGLNLGELARIWKGGCIIRAGFLNKIKQAYDADPTLANLLLAPEFRQTILDRQLAWRRVIAIAAERGIPVPAFSASLDYFDSYRRDRLPQNLTQAQRDYFGAHTYERTDRSGSFHAQWF</sequence>
<reference key="1">
    <citation type="journal article" date="1990" name="J. Bacteriol.">
        <title>Genetic tagging, cloning, and DNA sequence of the Synechococcus sp. strain PCC 7942 gene (gnd) encoding 6-phosphogluconate dehydrogenase.</title>
        <authorList>
            <person name="Broedel S.E. Jr."/>
            <person name="Wolf R.E. Jr."/>
        </authorList>
    </citation>
    <scope>NUCLEOTIDE SEQUENCE [GENOMIC DNA]</scope>
    <scope>SUBSTRATE-BINDING SITE</scope>
</reference>
<reference key="2">
    <citation type="submission" date="1991-04" db="EMBL/GenBank/DDBJ databases">
        <title>Amino acid sequence comparisons of 6-phosphogluconate dehydrogenase.</title>
        <authorList>
            <person name="Culler D.C."/>
            <person name="Krogmann D.W."/>
        </authorList>
    </citation>
    <scope>NUCLEOTIDE SEQUENCE [GENOMIC DNA]</scope>
</reference>
<reference key="3">
    <citation type="submission" date="2005-08" db="EMBL/GenBank/DDBJ databases">
        <title>Complete sequence of chromosome 1 of Synechococcus elongatus PCC 7942.</title>
        <authorList>
            <consortium name="US DOE Joint Genome Institute"/>
            <person name="Copeland A."/>
            <person name="Lucas S."/>
            <person name="Lapidus A."/>
            <person name="Barry K."/>
            <person name="Detter J.C."/>
            <person name="Glavina T."/>
            <person name="Hammon N."/>
            <person name="Israni S."/>
            <person name="Pitluck S."/>
            <person name="Schmutz J."/>
            <person name="Larimer F."/>
            <person name="Land M."/>
            <person name="Kyrpides N."/>
            <person name="Lykidis A."/>
            <person name="Golden S."/>
            <person name="Richardson P."/>
        </authorList>
    </citation>
    <scope>NUCLEOTIDE SEQUENCE [LARGE SCALE GENOMIC DNA]</scope>
    <source>
        <strain>ATCC 33912 / PCC 7942 / FACHB-805</strain>
    </source>
</reference>
<name>6PGD_SYNE7</name>
<protein>
    <recommendedName>
        <fullName>6-phosphogluconate dehydrogenase, decarboxylating</fullName>
        <ecNumber>1.1.1.44</ecNumber>
    </recommendedName>
</protein>
<feature type="chain" id="PRO_0000090060" description="6-phosphogluconate dehydrogenase, decarboxylating">
    <location>
        <begin position="1"/>
        <end position="471"/>
    </location>
</feature>
<feature type="active site" description="Proton acceptor" evidence="1">
    <location>
        <position position="183"/>
    </location>
</feature>
<feature type="active site" description="Proton donor" evidence="1">
    <location>
        <position position="190"/>
    </location>
</feature>
<feature type="binding site" evidence="1">
    <location>
        <begin position="10"/>
        <end position="15"/>
    </location>
    <ligand>
        <name>NADP(+)</name>
        <dbReference type="ChEBI" id="CHEBI:58349"/>
    </ligand>
</feature>
<feature type="binding site" evidence="1">
    <location>
        <begin position="33"/>
        <end position="35"/>
    </location>
    <ligand>
        <name>NADP(+)</name>
        <dbReference type="ChEBI" id="CHEBI:58349"/>
    </ligand>
</feature>
<feature type="binding site" evidence="1">
    <location>
        <begin position="75"/>
        <end position="77"/>
    </location>
    <ligand>
        <name>NADP(+)</name>
        <dbReference type="ChEBI" id="CHEBI:58349"/>
    </ligand>
</feature>
<feature type="binding site" evidence="1">
    <location>
        <position position="103"/>
    </location>
    <ligand>
        <name>NADP(+)</name>
        <dbReference type="ChEBI" id="CHEBI:58349"/>
    </ligand>
</feature>
<feature type="binding site" description="in other chain" evidence="1">
    <location>
        <position position="103"/>
    </location>
    <ligand>
        <name>substrate</name>
        <note>ligand shared between dimeric partners</note>
    </ligand>
</feature>
<feature type="binding site" description="in other chain" evidence="1">
    <location>
        <begin position="129"/>
        <end position="131"/>
    </location>
    <ligand>
        <name>substrate</name>
        <note>ligand shared between dimeric partners</note>
    </ligand>
</feature>
<feature type="binding site" description="in other chain" evidence="1">
    <location>
        <begin position="186"/>
        <end position="187"/>
    </location>
    <ligand>
        <name>substrate</name>
        <note>ligand shared between dimeric partners</note>
    </ligand>
</feature>
<feature type="binding site" description="in other chain" evidence="1">
    <location>
        <position position="191"/>
    </location>
    <ligand>
        <name>substrate</name>
        <note>ligand shared between dimeric partners</note>
    </ligand>
</feature>
<feature type="binding site" description="in other chain" evidence="1">
    <location>
        <position position="263"/>
    </location>
    <ligand>
        <name>substrate</name>
        <note>ligand shared between dimeric partners</note>
    </ligand>
</feature>
<feature type="binding site" description="in other chain" evidence="1">
    <location>
        <position position="290"/>
    </location>
    <ligand>
        <name>substrate</name>
        <note>ligand shared between dimeric partners</note>
    </ligand>
</feature>
<feature type="binding site" evidence="1">
    <location>
        <position position="449"/>
    </location>
    <ligand>
        <name>substrate</name>
        <note>ligand shared between dimeric partners</note>
    </ligand>
</feature>
<feature type="binding site" evidence="1">
    <location>
        <position position="455"/>
    </location>
    <ligand>
        <name>substrate</name>
        <note>ligand shared between dimeric partners</note>
    </ligand>
</feature>
<feature type="sequence conflict" description="In Ref. 1; AAA27330." evidence="2" ref="1">
    <original>EPIVRS</original>
    <variation>SRSVPT</variation>
    <location>
        <begin position="154"/>
        <end position="159"/>
    </location>
</feature>
<feature type="sequence conflict" description="In Ref. 2; CAA41555." evidence="2" ref="2">
    <original>S</original>
    <variation>T</variation>
    <location>
        <position position="159"/>
    </location>
</feature>
<feature type="sequence conflict" description="In Ref. 2; CAA41555." evidence="2" ref="2">
    <original>A</original>
    <variation>R</variation>
    <location>
        <position position="407"/>
    </location>
</feature>
<feature type="sequence conflict" description="In Ref. 2; CAA41555." evidence="2" ref="2">
    <original>AAERGIPVPAFSASLDYFDSYRRDR</original>
    <variation>RQNEEFRFRFQCFPGLLRQLPARS</variation>
    <location>
        <begin position="415"/>
        <end position="439"/>
    </location>
</feature>
<feature type="sequence conflict" description="In Ref. 1; AAA27330." evidence="2" ref="1">
    <original>RDRLP</original>
    <variation>ASPA</variation>
    <location>
        <begin position="437"/>
        <end position="441"/>
    </location>
</feature>
<feature type="sequence conflict" description="In Ref. 1; AAA27330." evidence="2" ref="1">
    <original>DYFG</original>
    <variation>TTC</variation>
    <location>
        <begin position="450"/>
        <end position="453"/>
    </location>
</feature>
<feature type="sequence conflict" description="In Ref. 1; AAA27330." evidence="2" ref="1">
    <original>ERTDRSGS</original>
    <variation>KAPIALL</variation>
    <location>
        <begin position="458"/>
        <end position="465"/>
    </location>
</feature>
<feature type="sequence conflict" description="In Ref. 1; AAA27330." evidence="2" ref="1">
    <original>QW</original>
    <variation>M</variation>
    <location>
        <begin position="469"/>
        <end position="470"/>
    </location>
</feature>